<organism>
    <name type="scientific">Alkaliphilus metalliredigens (strain QYMF)</name>
    <dbReference type="NCBI Taxonomy" id="293826"/>
    <lineage>
        <taxon>Bacteria</taxon>
        <taxon>Bacillati</taxon>
        <taxon>Bacillota</taxon>
        <taxon>Clostridia</taxon>
        <taxon>Peptostreptococcales</taxon>
        <taxon>Natronincolaceae</taxon>
        <taxon>Alkaliphilus</taxon>
    </lineage>
</organism>
<feature type="chain" id="PRO_1000133056" description="Phosphopentomutase">
    <location>
        <begin position="1"/>
        <end position="390"/>
    </location>
</feature>
<feature type="binding site" evidence="1">
    <location>
        <position position="11"/>
    </location>
    <ligand>
        <name>Mn(2+)</name>
        <dbReference type="ChEBI" id="CHEBI:29035"/>
        <label>1</label>
    </ligand>
</feature>
<feature type="binding site" evidence="1">
    <location>
        <position position="283"/>
    </location>
    <ligand>
        <name>Mn(2+)</name>
        <dbReference type="ChEBI" id="CHEBI:29035"/>
        <label>2</label>
    </ligand>
</feature>
<feature type="binding site" evidence="1">
    <location>
        <position position="288"/>
    </location>
    <ligand>
        <name>Mn(2+)</name>
        <dbReference type="ChEBI" id="CHEBI:29035"/>
        <label>2</label>
    </ligand>
</feature>
<feature type="binding site" evidence="1">
    <location>
        <position position="324"/>
    </location>
    <ligand>
        <name>Mn(2+)</name>
        <dbReference type="ChEBI" id="CHEBI:29035"/>
        <label>1</label>
    </ligand>
</feature>
<feature type="binding site" evidence="1">
    <location>
        <position position="325"/>
    </location>
    <ligand>
        <name>Mn(2+)</name>
        <dbReference type="ChEBI" id="CHEBI:29035"/>
        <label>1</label>
    </ligand>
</feature>
<feature type="binding site" evidence="1">
    <location>
        <position position="336"/>
    </location>
    <ligand>
        <name>Mn(2+)</name>
        <dbReference type="ChEBI" id="CHEBI:29035"/>
        <label>2</label>
    </ligand>
</feature>
<keyword id="KW-0963">Cytoplasm</keyword>
<keyword id="KW-0413">Isomerase</keyword>
<keyword id="KW-0464">Manganese</keyword>
<keyword id="KW-0479">Metal-binding</keyword>
<keyword id="KW-1185">Reference proteome</keyword>
<comment type="function">
    <text evidence="1">Isomerase that catalyzes the conversion of deoxy-ribose 1-phosphate (dRib-1-P) and ribose 1-phosphate (Rib-1-P) to deoxy-ribose 5-phosphate (dRib-5-P) and ribose 5-phosphate (Rib-5-P), respectively.</text>
</comment>
<comment type="catalytic activity">
    <reaction evidence="1">
        <text>2-deoxy-alpha-D-ribose 1-phosphate = 2-deoxy-D-ribose 5-phosphate</text>
        <dbReference type="Rhea" id="RHEA:27658"/>
        <dbReference type="ChEBI" id="CHEBI:57259"/>
        <dbReference type="ChEBI" id="CHEBI:62877"/>
        <dbReference type="EC" id="5.4.2.7"/>
    </reaction>
</comment>
<comment type="catalytic activity">
    <reaction evidence="1">
        <text>alpha-D-ribose 1-phosphate = D-ribose 5-phosphate</text>
        <dbReference type="Rhea" id="RHEA:18793"/>
        <dbReference type="ChEBI" id="CHEBI:57720"/>
        <dbReference type="ChEBI" id="CHEBI:78346"/>
        <dbReference type="EC" id="5.4.2.7"/>
    </reaction>
</comment>
<comment type="cofactor">
    <cofactor evidence="1">
        <name>Mn(2+)</name>
        <dbReference type="ChEBI" id="CHEBI:29035"/>
    </cofactor>
    <text evidence="1">Binds 2 manganese ions.</text>
</comment>
<comment type="pathway">
    <text evidence="1">Carbohydrate degradation; 2-deoxy-D-ribose 1-phosphate degradation; D-glyceraldehyde 3-phosphate and acetaldehyde from 2-deoxy-alpha-D-ribose 1-phosphate: step 1/2.</text>
</comment>
<comment type="subcellular location">
    <subcellularLocation>
        <location evidence="1">Cytoplasm</location>
    </subcellularLocation>
</comment>
<comment type="similarity">
    <text evidence="1">Belongs to the phosphopentomutase family.</text>
</comment>
<name>DEOB_ALKMQ</name>
<evidence type="ECO:0000255" key="1">
    <source>
        <dbReference type="HAMAP-Rule" id="MF_00740"/>
    </source>
</evidence>
<dbReference type="EC" id="5.4.2.7" evidence="1"/>
<dbReference type="EMBL" id="CP000724">
    <property type="protein sequence ID" value="ABR48677.1"/>
    <property type="molecule type" value="Genomic_DNA"/>
</dbReference>
<dbReference type="RefSeq" id="WP_012063652.1">
    <property type="nucleotide sequence ID" value="NC_009633.1"/>
</dbReference>
<dbReference type="SMR" id="A6TR59"/>
<dbReference type="STRING" id="293826.Amet_2524"/>
<dbReference type="KEGG" id="amt:Amet_2524"/>
<dbReference type="eggNOG" id="COG1015">
    <property type="taxonomic scope" value="Bacteria"/>
</dbReference>
<dbReference type="HOGENOM" id="CLU_053861_0_0_9"/>
<dbReference type="OrthoDB" id="9769930at2"/>
<dbReference type="UniPathway" id="UPA00002">
    <property type="reaction ID" value="UER00467"/>
</dbReference>
<dbReference type="Proteomes" id="UP000001572">
    <property type="component" value="Chromosome"/>
</dbReference>
<dbReference type="GO" id="GO:0005829">
    <property type="term" value="C:cytosol"/>
    <property type="evidence" value="ECO:0007669"/>
    <property type="project" value="TreeGrafter"/>
</dbReference>
<dbReference type="GO" id="GO:0000287">
    <property type="term" value="F:magnesium ion binding"/>
    <property type="evidence" value="ECO:0007669"/>
    <property type="project" value="InterPro"/>
</dbReference>
<dbReference type="GO" id="GO:0030145">
    <property type="term" value="F:manganese ion binding"/>
    <property type="evidence" value="ECO:0007669"/>
    <property type="project" value="UniProtKB-UniRule"/>
</dbReference>
<dbReference type="GO" id="GO:0008973">
    <property type="term" value="F:phosphopentomutase activity"/>
    <property type="evidence" value="ECO:0007669"/>
    <property type="project" value="UniProtKB-UniRule"/>
</dbReference>
<dbReference type="GO" id="GO:0006018">
    <property type="term" value="P:2-deoxyribose 1-phosphate catabolic process"/>
    <property type="evidence" value="ECO:0007669"/>
    <property type="project" value="UniProtKB-UniRule"/>
</dbReference>
<dbReference type="GO" id="GO:0006015">
    <property type="term" value="P:5-phosphoribose 1-diphosphate biosynthetic process"/>
    <property type="evidence" value="ECO:0007669"/>
    <property type="project" value="UniProtKB-UniPathway"/>
</dbReference>
<dbReference type="GO" id="GO:0043094">
    <property type="term" value="P:metabolic compound salvage"/>
    <property type="evidence" value="ECO:0007669"/>
    <property type="project" value="InterPro"/>
</dbReference>
<dbReference type="GO" id="GO:0009117">
    <property type="term" value="P:nucleotide metabolic process"/>
    <property type="evidence" value="ECO:0007669"/>
    <property type="project" value="InterPro"/>
</dbReference>
<dbReference type="CDD" id="cd16009">
    <property type="entry name" value="PPM"/>
    <property type="match status" value="1"/>
</dbReference>
<dbReference type="FunFam" id="3.30.70.1250:FF:000001">
    <property type="entry name" value="Phosphopentomutase"/>
    <property type="match status" value="1"/>
</dbReference>
<dbReference type="Gene3D" id="3.40.720.10">
    <property type="entry name" value="Alkaline Phosphatase, subunit A"/>
    <property type="match status" value="1"/>
</dbReference>
<dbReference type="Gene3D" id="3.30.70.1250">
    <property type="entry name" value="Phosphopentomutase"/>
    <property type="match status" value="1"/>
</dbReference>
<dbReference type="HAMAP" id="MF_00740">
    <property type="entry name" value="Phosphopentomut"/>
    <property type="match status" value="1"/>
</dbReference>
<dbReference type="InterPro" id="IPR017850">
    <property type="entry name" value="Alkaline_phosphatase_core_sf"/>
</dbReference>
<dbReference type="InterPro" id="IPR010045">
    <property type="entry name" value="DeoB"/>
</dbReference>
<dbReference type="InterPro" id="IPR006124">
    <property type="entry name" value="Metalloenzyme"/>
</dbReference>
<dbReference type="InterPro" id="IPR024052">
    <property type="entry name" value="Phosphopentomutase_DeoB_cap_sf"/>
</dbReference>
<dbReference type="NCBIfam" id="TIGR01696">
    <property type="entry name" value="deoB"/>
    <property type="match status" value="1"/>
</dbReference>
<dbReference type="NCBIfam" id="NF003766">
    <property type="entry name" value="PRK05362.1"/>
    <property type="match status" value="1"/>
</dbReference>
<dbReference type="PANTHER" id="PTHR21110">
    <property type="entry name" value="PHOSPHOPENTOMUTASE"/>
    <property type="match status" value="1"/>
</dbReference>
<dbReference type="PANTHER" id="PTHR21110:SF0">
    <property type="entry name" value="PHOSPHOPENTOMUTASE"/>
    <property type="match status" value="1"/>
</dbReference>
<dbReference type="Pfam" id="PF01676">
    <property type="entry name" value="Metalloenzyme"/>
    <property type="match status" value="1"/>
</dbReference>
<dbReference type="PIRSF" id="PIRSF001491">
    <property type="entry name" value="Ppentomutase"/>
    <property type="match status" value="1"/>
</dbReference>
<dbReference type="SUPFAM" id="SSF53649">
    <property type="entry name" value="Alkaline phosphatase-like"/>
    <property type="match status" value="1"/>
</dbReference>
<dbReference type="SUPFAM" id="SSF143856">
    <property type="entry name" value="DeoB insert domain-like"/>
    <property type="match status" value="1"/>
</dbReference>
<sequence length="390" mass="42720">MINRVVLFIMDSVGIGALPDADQFGDVGSNTLGNISKVEQGIALPNLTALGLGNIEDIQGVNPVESPKGAYGKSAEVSNGKDTTTGHWELVGLEVTEPFNTYPQGFPADVVENFEKQIGRKMLGNKPASGTVILDELGKEHMQTGHPIVYTSADSVFQIAAHEEVILLGELYKMCEIAREIMRGDHAVARVIARPFVGDPGNFIRTSNRRDYSLDPFGKTLLDIAKEAGKDVIGIGKIEDIFNGNGITEAIHTKDNMDGIDQTIAYLKKENKGIIFTNLVDFDSKYGHRRDPKGYKQALEEMDRRIPEILSHLNDEDLIIFTADHGNDPTFKGSDHTREYIPIVIYGKQVKAGVNIGTRKSFADIAATISDILNIDDTGNGESFKKFILE</sequence>
<protein>
    <recommendedName>
        <fullName evidence="1">Phosphopentomutase</fullName>
        <ecNumber evidence="1">5.4.2.7</ecNumber>
    </recommendedName>
    <alternativeName>
        <fullName evidence="1">Phosphodeoxyribomutase</fullName>
    </alternativeName>
</protein>
<reference key="1">
    <citation type="journal article" date="2016" name="Genome Announc.">
        <title>Complete genome sequence of Alkaliphilus metalliredigens strain QYMF, an alkaliphilic and metal-reducing bacterium isolated from borax-contaminated leachate ponds.</title>
        <authorList>
            <person name="Hwang C."/>
            <person name="Copeland A."/>
            <person name="Lucas S."/>
            <person name="Lapidus A."/>
            <person name="Barry K."/>
            <person name="Detter J.C."/>
            <person name="Glavina Del Rio T."/>
            <person name="Hammon N."/>
            <person name="Israni S."/>
            <person name="Dalin E."/>
            <person name="Tice H."/>
            <person name="Pitluck S."/>
            <person name="Chertkov O."/>
            <person name="Brettin T."/>
            <person name="Bruce D."/>
            <person name="Han C."/>
            <person name="Schmutz J."/>
            <person name="Larimer F."/>
            <person name="Land M.L."/>
            <person name="Hauser L."/>
            <person name="Kyrpides N."/>
            <person name="Mikhailova N."/>
            <person name="Ye Q."/>
            <person name="Zhou J."/>
            <person name="Richardson P."/>
            <person name="Fields M.W."/>
        </authorList>
    </citation>
    <scope>NUCLEOTIDE SEQUENCE [LARGE SCALE GENOMIC DNA]</scope>
    <source>
        <strain>QYMF</strain>
    </source>
</reference>
<accession>A6TR59</accession>
<proteinExistence type="inferred from homology"/>
<gene>
    <name evidence="1" type="primary">deoB</name>
    <name type="ordered locus">Amet_2524</name>
</gene>